<dbReference type="EC" id="3.6.1.-" evidence="1"/>
<dbReference type="EMBL" id="CP000036">
    <property type="protein sequence ID" value="ABB67034.1"/>
    <property type="molecule type" value="Genomic_DNA"/>
</dbReference>
<dbReference type="RefSeq" id="WP_000193711.1">
    <property type="nucleotide sequence ID" value="NC_007613.1"/>
</dbReference>
<dbReference type="SMR" id="Q31Y24"/>
<dbReference type="GeneID" id="75204261"/>
<dbReference type="KEGG" id="sbo:SBO_2483"/>
<dbReference type="HOGENOM" id="CLU_062658_6_0_6"/>
<dbReference type="Proteomes" id="UP000007067">
    <property type="component" value="Chromosome"/>
</dbReference>
<dbReference type="GO" id="GO:0005829">
    <property type="term" value="C:cytosol"/>
    <property type="evidence" value="ECO:0007669"/>
    <property type="project" value="TreeGrafter"/>
</dbReference>
<dbReference type="GO" id="GO:0016818">
    <property type="term" value="F:hydrolase activity, acting on acid anhydrides, in phosphorus-containing anhydrides"/>
    <property type="evidence" value="ECO:0007669"/>
    <property type="project" value="InterPro"/>
</dbReference>
<dbReference type="GO" id="GO:0046872">
    <property type="term" value="F:metal ion binding"/>
    <property type="evidence" value="ECO:0007669"/>
    <property type="project" value="UniProtKB-KW"/>
</dbReference>
<dbReference type="GO" id="GO:0006753">
    <property type="term" value="P:nucleoside phosphate metabolic process"/>
    <property type="evidence" value="ECO:0007669"/>
    <property type="project" value="TreeGrafter"/>
</dbReference>
<dbReference type="GO" id="GO:0019693">
    <property type="term" value="P:ribose phosphate metabolic process"/>
    <property type="evidence" value="ECO:0007669"/>
    <property type="project" value="TreeGrafter"/>
</dbReference>
<dbReference type="CDD" id="cd24157">
    <property type="entry name" value="NUDIX_GDPMK"/>
    <property type="match status" value="1"/>
</dbReference>
<dbReference type="FunFam" id="3.90.79.10:FF:000010">
    <property type="entry name" value="GDP-mannose pyrophosphatase NudK"/>
    <property type="match status" value="1"/>
</dbReference>
<dbReference type="Gene3D" id="3.90.79.10">
    <property type="entry name" value="Nucleoside Triphosphate Pyrophosphohydrolase"/>
    <property type="match status" value="1"/>
</dbReference>
<dbReference type="InterPro" id="IPR004385">
    <property type="entry name" value="NDP_pyrophosphatase"/>
</dbReference>
<dbReference type="InterPro" id="IPR015797">
    <property type="entry name" value="NUDIX_hydrolase-like_dom_sf"/>
</dbReference>
<dbReference type="InterPro" id="IPR000086">
    <property type="entry name" value="NUDIX_hydrolase_dom"/>
</dbReference>
<dbReference type="NCBIfam" id="TIGR00052">
    <property type="entry name" value="nudix-type nucleoside diphosphatase, YffH/AdpP family"/>
    <property type="match status" value="1"/>
</dbReference>
<dbReference type="NCBIfam" id="NF011585">
    <property type="entry name" value="PRK15009.1"/>
    <property type="match status" value="1"/>
</dbReference>
<dbReference type="PANTHER" id="PTHR11839:SF18">
    <property type="entry name" value="NUDIX HYDROLASE DOMAIN-CONTAINING PROTEIN"/>
    <property type="match status" value="1"/>
</dbReference>
<dbReference type="PANTHER" id="PTHR11839">
    <property type="entry name" value="UDP/ADP-SUGAR PYROPHOSPHATASE"/>
    <property type="match status" value="1"/>
</dbReference>
<dbReference type="Pfam" id="PF00293">
    <property type="entry name" value="NUDIX"/>
    <property type="match status" value="1"/>
</dbReference>
<dbReference type="SUPFAM" id="SSF55811">
    <property type="entry name" value="Nudix"/>
    <property type="match status" value="1"/>
</dbReference>
<dbReference type="PROSITE" id="PS51462">
    <property type="entry name" value="NUDIX"/>
    <property type="match status" value="1"/>
</dbReference>
<comment type="function">
    <text evidence="1">Nucleoside diphosphate sugar hydrolase that hydrolyzes GDP-mannose as its preferred substrate, yielding GMP and mannose-1-phosphate.</text>
</comment>
<comment type="catalytic activity">
    <reaction evidence="1">
        <text>GDP-alpha-D-mannose + H2O = alpha-D-mannose 1-phosphate + GMP + 2 H(+)</text>
        <dbReference type="Rhea" id="RHEA:27978"/>
        <dbReference type="ChEBI" id="CHEBI:15377"/>
        <dbReference type="ChEBI" id="CHEBI:15378"/>
        <dbReference type="ChEBI" id="CHEBI:57527"/>
        <dbReference type="ChEBI" id="CHEBI:58115"/>
        <dbReference type="ChEBI" id="CHEBI:58409"/>
    </reaction>
</comment>
<comment type="cofactor">
    <cofactor evidence="1">
        <name>Mg(2+)</name>
        <dbReference type="ChEBI" id="CHEBI:18420"/>
    </cofactor>
</comment>
<comment type="subunit">
    <text evidence="1">Homodimer.</text>
</comment>
<comment type="domain">
    <text evidence="1">In the dimer, the N-terminal domains are swapped between the two monomers, such that residues of both chains contribute to the active site.</text>
</comment>
<comment type="similarity">
    <text evidence="3">Belongs to the Nudix hydrolase family. NudK subfamily.</text>
</comment>
<gene>
    <name type="primary">nudK</name>
    <name type="ordered locus">SBO_2483</name>
</gene>
<evidence type="ECO:0000250" key="1">
    <source>
        <dbReference type="UniProtKB" id="P37128"/>
    </source>
</evidence>
<evidence type="ECO:0000255" key="2">
    <source>
        <dbReference type="PROSITE-ProRule" id="PRU00794"/>
    </source>
</evidence>
<evidence type="ECO:0000305" key="3"/>
<sequence length="191" mass="21733">MTQQITLIKDKILSDNYFTLHNITYDLTRKDGEVIRHKREVYDRGNGATILLYNAKKKTVVLIRQFRVATWVNGNESGQLIETCAGLLDNDEPEVCIRKEAIEETGYEVGEVRKLFELYMSPGGVTELIHFFIAEYSDNQRANAGGGVEDEDIEVLELPFSQALEMIKTGEIRDGKTVLLLNYLQTSHLMD</sequence>
<name>NUDK_SHIBS</name>
<feature type="chain" id="PRO_0000342500" description="GDP-mannose pyrophosphatase">
    <location>
        <begin position="1"/>
        <end position="191"/>
    </location>
</feature>
<feature type="domain" description="Nudix hydrolase" evidence="2">
    <location>
        <begin position="43"/>
        <end position="180"/>
    </location>
</feature>
<feature type="short sequence motif" description="Nudix box">
    <location>
        <begin position="86"/>
        <end position="106"/>
    </location>
</feature>
<feature type="binding site" description="in other chain" evidence="1">
    <location>
        <position position="17"/>
    </location>
    <ligand>
        <name>GDP-alpha-D-mannose</name>
        <dbReference type="ChEBI" id="CHEBI:57527"/>
        <note>ligand shared between dimeric partners</note>
    </ligand>
</feature>
<feature type="binding site" evidence="1">
    <location>
        <begin position="38"/>
        <end position="40"/>
    </location>
    <ligand>
        <name>GDP-alpha-D-mannose</name>
        <dbReference type="ChEBI" id="CHEBI:57527"/>
        <note>ligand shared between dimeric partners</note>
    </ligand>
</feature>
<feature type="binding site" description="in other chain" evidence="1">
    <location>
        <position position="67"/>
    </location>
    <ligand>
        <name>GDP-alpha-D-mannose</name>
        <dbReference type="ChEBI" id="CHEBI:57527"/>
        <note>ligand shared between dimeric partners</note>
    </ligand>
</feature>
<feature type="binding site" description="in other chain" evidence="1">
    <location>
        <begin position="85"/>
        <end position="87"/>
    </location>
    <ligand>
        <name>GDP-alpha-D-mannose</name>
        <dbReference type="ChEBI" id="CHEBI:57527"/>
        <note>ligand shared between dimeric partners</note>
    </ligand>
</feature>
<feature type="binding site" evidence="1">
    <location>
        <position position="85"/>
    </location>
    <ligand>
        <name>Mg(2+)</name>
        <dbReference type="ChEBI" id="CHEBI:18420"/>
        <label>1</label>
    </ligand>
</feature>
<feature type="binding site" evidence="1">
    <location>
        <position position="100"/>
    </location>
    <ligand>
        <name>Mg(2+)</name>
        <dbReference type="ChEBI" id="CHEBI:18420"/>
        <label>2</label>
    </ligand>
</feature>
<feature type="binding site" description="in other chain" evidence="1">
    <location>
        <position position="104"/>
    </location>
    <ligand>
        <name>GDP-alpha-D-mannose</name>
        <dbReference type="ChEBI" id="CHEBI:57527"/>
        <note>ligand shared between dimeric partners</note>
    </ligand>
</feature>
<feature type="binding site" evidence="1">
    <location>
        <position position="104"/>
    </location>
    <ligand>
        <name>Mg(2+)</name>
        <dbReference type="ChEBI" id="CHEBI:18420"/>
        <label>1</label>
    </ligand>
</feature>
<feature type="binding site" evidence="1">
    <location>
        <position position="104"/>
    </location>
    <ligand>
        <name>Mg(2+)</name>
        <dbReference type="ChEBI" id="CHEBI:18420"/>
        <label>2</label>
    </ligand>
</feature>
<feature type="binding site" description="in other chain" evidence="1">
    <location>
        <position position="127"/>
    </location>
    <ligand>
        <name>GDP-alpha-D-mannose</name>
        <dbReference type="ChEBI" id="CHEBI:57527"/>
        <note>ligand shared between dimeric partners</note>
    </ligand>
</feature>
<feature type="binding site" description="in other chain" evidence="1">
    <location>
        <begin position="150"/>
        <end position="151"/>
    </location>
    <ligand>
        <name>GDP-alpha-D-mannose</name>
        <dbReference type="ChEBI" id="CHEBI:57527"/>
        <note>ligand shared between dimeric partners</note>
    </ligand>
</feature>
<feature type="binding site" evidence="1">
    <location>
        <position position="151"/>
    </location>
    <ligand>
        <name>Mg(2+)</name>
        <dbReference type="ChEBI" id="CHEBI:18420"/>
        <label>2</label>
    </ligand>
</feature>
<feature type="binding site" description="in other chain" evidence="1">
    <location>
        <position position="176"/>
    </location>
    <ligand>
        <name>GDP-alpha-D-mannose</name>
        <dbReference type="ChEBI" id="CHEBI:57527"/>
        <note>ligand shared between dimeric partners</note>
    </ligand>
</feature>
<proteinExistence type="inferred from homology"/>
<keyword id="KW-0378">Hydrolase</keyword>
<keyword id="KW-0460">Magnesium</keyword>
<keyword id="KW-0479">Metal-binding</keyword>
<protein>
    <recommendedName>
        <fullName>GDP-mannose pyrophosphatase</fullName>
        <ecNumber evidence="1">3.6.1.-</ecNumber>
    </recommendedName>
    <alternativeName>
        <fullName>GDP-mannose hydrolase</fullName>
    </alternativeName>
    <alternativeName>
        <fullName>GDPMK</fullName>
    </alternativeName>
</protein>
<reference key="1">
    <citation type="journal article" date="2005" name="Nucleic Acids Res.">
        <title>Genome dynamics and diversity of Shigella species, the etiologic agents of bacillary dysentery.</title>
        <authorList>
            <person name="Yang F."/>
            <person name="Yang J."/>
            <person name="Zhang X."/>
            <person name="Chen L."/>
            <person name="Jiang Y."/>
            <person name="Yan Y."/>
            <person name="Tang X."/>
            <person name="Wang J."/>
            <person name="Xiong Z."/>
            <person name="Dong J."/>
            <person name="Xue Y."/>
            <person name="Zhu Y."/>
            <person name="Xu X."/>
            <person name="Sun L."/>
            <person name="Chen S."/>
            <person name="Nie H."/>
            <person name="Peng J."/>
            <person name="Xu J."/>
            <person name="Wang Y."/>
            <person name="Yuan Z."/>
            <person name="Wen Y."/>
            <person name="Yao Z."/>
            <person name="Shen Y."/>
            <person name="Qiang B."/>
            <person name="Hou Y."/>
            <person name="Yu J."/>
            <person name="Jin Q."/>
        </authorList>
    </citation>
    <scope>NUCLEOTIDE SEQUENCE [LARGE SCALE GENOMIC DNA]</scope>
    <source>
        <strain>Sb227</strain>
    </source>
</reference>
<organism>
    <name type="scientific">Shigella boydii serotype 4 (strain Sb227)</name>
    <dbReference type="NCBI Taxonomy" id="300268"/>
    <lineage>
        <taxon>Bacteria</taxon>
        <taxon>Pseudomonadati</taxon>
        <taxon>Pseudomonadota</taxon>
        <taxon>Gammaproteobacteria</taxon>
        <taxon>Enterobacterales</taxon>
        <taxon>Enterobacteriaceae</taxon>
        <taxon>Shigella</taxon>
    </lineage>
</organism>
<accession>Q31Y24</accession>